<feature type="chain" id="PRO_0000331835" description="Methionine--tRNA ligase">
    <location>
        <begin position="1"/>
        <end position="683"/>
    </location>
</feature>
<feature type="domain" description="tRNA-binding" evidence="1">
    <location>
        <begin position="581"/>
        <end position="683"/>
    </location>
</feature>
<feature type="short sequence motif" description="'HIGH' region">
    <location>
        <begin position="15"/>
        <end position="25"/>
    </location>
</feature>
<feature type="short sequence motif" description="'KMSKS' region">
    <location>
        <begin position="332"/>
        <end position="336"/>
    </location>
</feature>
<feature type="binding site" evidence="1">
    <location>
        <position position="146"/>
    </location>
    <ligand>
        <name>Zn(2+)</name>
        <dbReference type="ChEBI" id="CHEBI:29105"/>
    </ligand>
</feature>
<feature type="binding site" evidence="1">
    <location>
        <position position="149"/>
    </location>
    <ligand>
        <name>Zn(2+)</name>
        <dbReference type="ChEBI" id="CHEBI:29105"/>
    </ligand>
</feature>
<feature type="binding site" evidence="1">
    <location>
        <position position="159"/>
    </location>
    <ligand>
        <name>Zn(2+)</name>
        <dbReference type="ChEBI" id="CHEBI:29105"/>
    </ligand>
</feature>
<feature type="binding site" evidence="1">
    <location>
        <position position="162"/>
    </location>
    <ligand>
        <name>Zn(2+)</name>
        <dbReference type="ChEBI" id="CHEBI:29105"/>
    </ligand>
</feature>
<feature type="binding site" evidence="1">
    <location>
        <position position="335"/>
    </location>
    <ligand>
        <name>ATP</name>
        <dbReference type="ChEBI" id="CHEBI:30616"/>
    </ligand>
</feature>
<dbReference type="EC" id="6.1.1.10" evidence="1"/>
<dbReference type="EMBL" id="CP000436">
    <property type="protein sequence ID" value="ABI25454.1"/>
    <property type="molecule type" value="Genomic_DNA"/>
</dbReference>
<dbReference type="SMR" id="Q0I3W7"/>
<dbReference type="KEGG" id="hso:HS_1179"/>
<dbReference type="eggNOG" id="COG0073">
    <property type="taxonomic scope" value="Bacteria"/>
</dbReference>
<dbReference type="eggNOG" id="COG0143">
    <property type="taxonomic scope" value="Bacteria"/>
</dbReference>
<dbReference type="HOGENOM" id="CLU_009710_7_0_6"/>
<dbReference type="GO" id="GO:0005829">
    <property type="term" value="C:cytosol"/>
    <property type="evidence" value="ECO:0007669"/>
    <property type="project" value="TreeGrafter"/>
</dbReference>
<dbReference type="GO" id="GO:0005524">
    <property type="term" value="F:ATP binding"/>
    <property type="evidence" value="ECO:0007669"/>
    <property type="project" value="UniProtKB-UniRule"/>
</dbReference>
<dbReference type="GO" id="GO:0046872">
    <property type="term" value="F:metal ion binding"/>
    <property type="evidence" value="ECO:0007669"/>
    <property type="project" value="UniProtKB-KW"/>
</dbReference>
<dbReference type="GO" id="GO:0004825">
    <property type="term" value="F:methionine-tRNA ligase activity"/>
    <property type="evidence" value="ECO:0007669"/>
    <property type="project" value="UniProtKB-UniRule"/>
</dbReference>
<dbReference type="GO" id="GO:0000049">
    <property type="term" value="F:tRNA binding"/>
    <property type="evidence" value="ECO:0007669"/>
    <property type="project" value="UniProtKB-KW"/>
</dbReference>
<dbReference type="GO" id="GO:0006431">
    <property type="term" value="P:methionyl-tRNA aminoacylation"/>
    <property type="evidence" value="ECO:0007669"/>
    <property type="project" value="UniProtKB-UniRule"/>
</dbReference>
<dbReference type="CDD" id="cd07957">
    <property type="entry name" value="Anticodon_Ia_Met"/>
    <property type="match status" value="1"/>
</dbReference>
<dbReference type="CDD" id="cd00814">
    <property type="entry name" value="MetRS_core"/>
    <property type="match status" value="1"/>
</dbReference>
<dbReference type="CDD" id="cd02800">
    <property type="entry name" value="tRNA_bind_EcMetRS_like"/>
    <property type="match status" value="1"/>
</dbReference>
<dbReference type="FunFam" id="1.10.730.10:FF:000005">
    <property type="entry name" value="Methionine--tRNA ligase"/>
    <property type="match status" value="1"/>
</dbReference>
<dbReference type="FunFam" id="2.20.28.20:FF:000001">
    <property type="entry name" value="Methionine--tRNA ligase"/>
    <property type="match status" value="1"/>
</dbReference>
<dbReference type="FunFam" id="2.40.50.140:FF:000042">
    <property type="entry name" value="Methionine--tRNA ligase"/>
    <property type="match status" value="1"/>
</dbReference>
<dbReference type="Gene3D" id="3.40.50.620">
    <property type="entry name" value="HUPs"/>
    <property type="match status" value="1"/>
</dbReference>
<dbReference type="Gene3D" id="1.10.730.10">
    <property type="entry name" value="Isoleucyl-tRNA Synthetase, Domain 1"/>
    <property type="match status" value="1"/>
</dbReference>
<dbReference type="Gene3D" id="2.20.28.20">
    <property type="entry name" value="Methionyl-tRNA synthetase, Zn-domain"/>
    <property type="match status" value="1"/>
</dbReference>
<dbReference type="Gene3D" id="2.40.50.140">
    <property type="entry name" value="Nucleic acid-binding proteins"/>
    <property type="match status" value="1"/>
</dbReference>
<dbReference type="HAMAP" id="MF_00098">
    <property type="entry name" value="Met_tRNA_synth_type1"/>
    <property type="match status" value="1"/>
</dbReference>
<dbReference type="InterPro" id="IPR001412">
    <property type="entry name" value="aa-tRNA-synth_I_CS"/>
</dbReference>
<dbReference type="InterPro" id="IPR041872">
    <property type="entry name" value="Anticodon_Met"/>
</dbReference>
<dbReference type="InterPro" id="IPR004495">
    <property type="entry name" value="Met-tRNA-synth_bsu_C"/>
</dbReference>
<dbReference type="InterPro" id="IPR023458">
    <property type="entry name" value="Met-tRNA_ligase_1"/>
</dbReference>
<dbReference type="InterPro" id="IPR014758">
    <property type="entry name" value="Met-tRNA_synth"/>
</dbReference>
<dbReference type="InterPro" id="IPR015413">
    <property type="entry name" value="Methionyl/Leucyl_tRNA_Synth"/>
</dbReference>
<dbReference type="InterPro" id="IPR033911">
    <property type="entry name" value="MetRS_core"/>
</dbReference>
<dbReference type="InterPro" id="IPR029038">
    <property type="entry name" value="MetRS_Zn"/>
</dbReference>
<dbReference type="InterPro" id="IPR012340">
    <property type="entry name" value="NA-bd_OB-fold"/>
</dbReference>
<dbReference type="InterPro" id="IPR014729">
    <property type="entry name" value="Rossmann-like_a/b/a_fold"/>
</dbReference>
<dbReference type="InterPro" id="IPR002547">
    <property type="entry name" value="tRNA-bd_dom"/>
</dbReference>
<dbReference type="InterPro" id="IPR009080">
    <property type="entry name" value="tRNAsynth_Ia_anticodon-bd"/>
</dbReference>
<dbReference type="NCBIfam" id="TIGR00398">
    <property type="entry name" value="metG"/>
    <property type="match status" value="1"/>
</dbReference>
<dbReference type="NCBIfam" id="TIGR00399">
    <property type="entry name" value="metG_C_term"/>
    <property type="match status" value="1"/>
</dbReference>
<dbReference type="NCBIfam" id="NF001100">
    <property type="entry name" value="PRK00133.1"/>
    <property type="match status" value="1"/>
</dbReference>
<dbReference type="PANTHER" id="PTHR45765">
    <property type="entry name" value="METHIONINE--TRNA LIGASE"/>
    <property type="match status" value="1"/>
</dbReference>
<dbReference type="PANTHER" id="PTHR45765:SF1">
    <property type="entry name" value="METHIONINE--TRNA LIGASE, CYTOPLASMIC"/>
    <property type="match status" value="1"/>
</dbReference>
<dbReference type="Pfam" id="PF19303">
    <property type="entry name" value="Anticodon_3"/>
    <property type="match status" value="1"/>
</dbReference>
<dbReference type="Pfam" id="PF09334">
    <property type="entry name" value="tRNA-synt_1g"/>
    <property type="match status" value="1"/>
</dbReference>
<dbReference type="Pfam" id="PF01588">
    <property type="entry name" value="tRNA_bind"/>
    <property type="match status" value="1"/>
</dbReference>
<dbReference type="PRINTS" id="PR01041">
    <property type="entry name" value="TRNASYNTHMET"/>
</dbReference>
<dbReference type="SUPFAM" id="SSF47323">
    <property type="entry name" value="Anticodon-binding domain of a subclass of class I aminoacyl-tRNA synthetases"/>
    <property type="match status" value="1"/>
</dbReference>
<dbReference type="SUPFAM" id="SSF57770">
    <property type="entry name" value="Methionyl-tRNA synthetase (MetRS), Zn-domain"/>
    <property type="match status" value="1"/>
</dbReference>
<dbReference type="SUPFAM" id="SSF50249">
    <property type="entry name" value="Nucleic acid-binding proteins"/>
    <property type="match status" value="1"/>
</dbReference>
<dbReference type="SUPFAM" id="SSF52374">
    <property type="entry name" value="Nucleotidylyl transferase"/>
    <property type="match status" value="1"/>
</dbReference>
<dbReference type="PROSITE" id="PS00178">
    <property type="entry name" value="AA_TRNA_LIGASE_I"/>
    <property type="match status" value="1"/>
</dbReference>
<dbReference type="PROSITE" id="PS50886">
    <property type="entry name" value="TRBD"/>
    <property type="match status" value="1"/>
</dbReference>
<reference key="1">
    <citation type="journal article" date="2007" name="J. Bacteriol.">
        <title>Complete genome sequence of Haemophilus somnus (Histophilus somni) strain 129Pt and comparison to Haemophilus ducreyi 35000HP and Haemophilus influenzae Rd.</title>
        <authorList>
            <person name="Challacombe J.F."/>
            <person name="Duncan A.J."/>
            <person name="Brettin T.S."/>
            <person name="Bruce D."/>
            <person name="Chertkov O."/>
            <person name="Detter J.C."/>
            <person name="Han C.S."/>
            <person name="Misra M."/>
            <person name="Richardson P."/>
            <person name="Tapia R."/>
            <person name="Thayer N."/>
            <person name="Xie G."/>
            <person name="Inzana T.J."/>
        </authorList>
    </citation>
    <scope>NUCLEOTIDE SEQUENCE [LARGE SCALE GENOMIC DNA]</scope>
    <source>
        <strain>129Pt</strain>
    </source>
</reference>
<name>SYM_HISS1</name>
<organism>
    <name type="scientific">Histophilus somni (strain 129Pt)</name>
    <name type="common">Haemophilus somnus</name>
    <dbReference type="NCBI Taxonomy" id="205914"/>
    <lineage>
        <taxon>Bacteria</taxon>
        <taxon>Pseudomonadati</taxon>
        <taxon>Pseudomonadota</taxon>
        <taxon>Gammaproteobacteria</taxon>
        <taxon>Pasteurellales</taxon>
        <taxon>Pasteurellaceae</taxon>
        <taxon>Histophilus</taxon>
    </lineage>
</organism>
<sequence length="683" mass="77622">MSTNSRQILVTCALPYANGPIHLGHMLEHIQADIWVRFQRMRGNEIYFVCADDAHGTPIMLKADQMGVKPEQLIADVQQKHMADFSGFNISFDNYHSTHSDENRELVEAIYHKLKQNGFIKTRIISQLFDPEKAMFLPDRFVKGTCPKCKAEDQYGDNCEVCSATYSPIELISPRSTVSGATPVLKESEHFFFDLPAFESMLTEWIRSGSLQQEVANKMQEWFEAGLQQWDISRDAPYFGFKIPNTDNKYFYVWLDAPIGYMASFKNLCGKKSGIDFDSFWSKESHAELYHFIGKDIMYFHSLFWPAMLDGASLRKPNNIFVHGYVTVNGEKMSKSRGTFIQAATYLKYLDPECLRYYYAAKLGSRIDDLDLNLDDFVQRVNTDLVNKLVNLASRNASFIQKRFDGKLADKLDDKMLFDEFIAQSELIADYYENREFGKAIREIMALTDKANKYVDEKAPWVIAKDESRTDELQQVCSMGIELFRVLIGYLKPVLPNLAARAEAFLNTQLTWENVASPLLDHQIAPFKPLFSRLDMKKIEEMIEASKIENAKANQTAGKSAVENKAFSEFEPIEESITIDDFFKVDLRVAKVLKCEAVPESNKLLKFILDIGNETRQVFSGIKAAYGKPEDLEGRFVIMVANLAPRKMKFGMSEGMILSAGNGGADLYLLDVDAGAKAGQRVK</sequence>
<proteinExistence type="inferred from homology"/>
<keyword id="KW-0030">Aminoacyl-tRNA synthetase</keyword>
<keyword id="KW-0067">ATP-binding</keyword>
<keyword id="KW-0963">Cytoplasm</keyword>
<keyword id="KW-0436">Ligase</keyword>
<keyword id="KW-0479">Metal-binding</keyword>
<keyword id="KW-0547">Nucleotide-binding</keyword>
<keyword id="KW-0648">Protein biosynthesis</keyword>
<keyword id="KW-0694">RNA-binding</keyword>
<keyword id="KW-0820">tRNA-binding</keyword>
<keyword id="KW-0862">Zinc</keyword>
<evidence type="ECO:0000255" key="1">
    <source>
        <dbReference type="HAMAP-Rule" id="MF_00098"/>
    </source>
</evidence>
<accession>Q0I3W7</accession>
<protein>
    <recommendedName>
        <fullName evidence="1">Methionine--tRNA ligase</fullName>
        <ecNumber evidence="1">6.1.1.10</ecNumber>
    </recommendedName>
    <alternativeName>
        <fullName evidence="1">Methionyl-tRNA synthetase</fullName>
        <shortName evidence="1">MetRS</shortName>
    </alternativeName>
</protein>
<comment type="function">
    <text evidence="1">Is required not only for elongation of protein synthesis but also for the initiation of all mRNA translation through initiator tRNA(fMet) aminoacylation.</text>
</comment>
<comment type="catalytic activity">
    <reaction evidence="1">
        <text>tRNA(Met) + L-methionine + ATP = L-methionyl-tRNA(Met) + AMP + diphosphate</text>
        <dbReference type="Rhea" id="RHEA:13481"/>
        <dbReference type="Rhea" id="RHEA-COMP:9667"/>
        <dbReference type="Rhea" id="RHEA-COMP:9698"/>
        <dbReference type="ChEBI" id="CHEBI:30616"/>
        <dbReference type="ChEBI" id="CHEBI:33019"/>
        <dbReference type="ChEBI" id="CHEBI:57844"/>
        <dbReference type="ChEBI" id="CHEBI:78442"/>
        <dbReference type="ChEBI" id="CHEBI:78530"/>
        <dbReference type="ChEBI" id="CHEBI:456215"/>
        <dbReference type="EC" id="6.1.1.10"/>
    </reaction>
</comment>
<comment type="cofactor">
    <cofactor evidence="1">
        <name>Zn(2+)</name>
        <dbReference type="ChEBI" id="CHEBI:29105"/>
    </cofactor>
    <text evidence="1">Binds 1 zinc ion per subunit.</text>
</comment>
<comment type="subunit">
    <text evidence="1">Homodimer.</text>
</comment>
<comment type="subcellular location">
    <subcellularLocation>
        <location evidence="1">Cytoplasm</location>
    </subcellularLocation>
</comment>
<comment type="similarity">
    <text evidence="1">Belongs to the class-I aminoacyl-tRNA synthetase family. MetG type 1 subfamily.</text>
</comment>
<gene>
    <name evidence="1" type="primary">metG</name>
    <name type="ordered locus">HS_1179</name>
</gene>